<dbReference type="EC" id="3.4.25.1" evidence="1"/>
<dbReference type="EMBL" id="U26421">
    <property type="protein sequence ID" value="AAC45740.1"/>
    <property type="molecule type" value="Genomic_DNA"/>
</dbReference>
<dbReference type="RefSeq" id="WP_222671511.1">
    <property type="nucleotide sequence ID" value="NZ_JABBPH010000001.1"/>
</dbReference>
<dbReference type="PDB" id="1Q5Q">
    <property type="method" value="X-ray"/>
    <property type="resolution" value="2.60 A"/>
    <property type="chains" value="H/I/J/K/L/M/N=66-294"/>
</dbReference>
<dbReference type="PDB" id="1Q5R">
    <property type="method" value="X-ray"/>
    <property type="resolution" value="3.10 A"/>
    <property type="chains" value="H/I/J/K/L/M/N=1-293"/>
</dbReference>
<dbReference type="PDB" id="2H6J">
    <property type="method" value="X-ray"/>
    <property type="resolution" value="3.20 A"/>
    <property type="chains" value="H/I/J/K/L/M/N=1-292"/>
</dbReference>
<dbReference type="PDBsum" id="1Q5Q"/>
<dbReference type="PDBsum" id="1Q5R"/>
<dbReference type="PDBsum" id="2H6J"/>
<dbReference type="SMR" id="Q53079"/>
<dbReference type="DIP" id="DIP-29144N"/>
<dbReference type="IntAct" id="Q53079">
    <property type="interactions" value="1"/>
</dbReference>
<dbReference type="MEROPS" id="T01.005"/>
<dbReference type="UniPathway" id="UPA00997"/>
<dbReference type="EvolutionaryTrace" id="Q53079"/>
<dbReference type="GO" id="GO:0005737">
    <property type="term" value="C:cytoplasm"/>
    <property type="evidence" value="ECO:0007669"/>
    <property type="project" value="UniProtKB-SubCell"/>
</dbReference>
<dbReference type="GO" id="GO:0019774">
    <property type="term" value="C:proteasome core complex, beta-subunit complex"/>
    <property type="evidence" value="ECO:0000314"/>
    <property type="project" value="UniProtKB"/>
</dbReference>
<dbReference type="GO" id="GO:0004175">
    <property type="term" value="F:endopeptidase activity"/>
    <property type="evidence" value="ECO:0000314"/>
    <property type="project" value="UniProtKB"/>
</dbReference>
<dbReference type="GO" id="GO:0004298">
    <property type="term" value="F:threonine-type endopeptidase activity"/>
    <property type="evidence" value="ECO:0007669"/>
    <property type="project" value="UniProtKB-UniRule"/>
</dbReference>
<dbReference type="GO" id="GO:0019941">
    <property type="term" value="P:modification-dependent protein catabolic process"/>
    <property type="evidence" value="ECO:0007669"/>
    <property type="project" value="UniProtKB-UniRule"/>
</dbReference>
<dbReference type="GO" id="GO:0010498">
    <property type="term" value="P:proteasomal protein catabolic process"/>
    <property type="evidence" value="ECO:0000314"/>
    <property type="project" value="UniProtKB"/>
</dbReference>
<dbReference type="CDD" id="cd01906">
    <property type="entry name" value="proteasome_protease_HslV"/>
    <property type="match status" value="1"/>
</dbReference>
<dbReference type="FunFam" id="3.60.20.10:FF:000046">
    <property type="entry name" value="Proteasome subunit beta"/>
    <property type="match status" value="1"/>
</dbReference>
<dbReference type="Gene3D" id="3.60.20.10">
    <property type="entry name" value="Glutamine Phosphoribosylpyrophosphate, subunit 1, domain 1"/>
    <property type="match status" value="1"/>
</dbReference>
<dbReference type="HAMAP" id="MF_02113_B">
    <property type="entry name" value="Proteasome_B_B"/>
    <property type="match status" value="1"/>
</dbReference>
<dbReference type="InterPro" id="IPR029055">
    <property type="entry name" value="Ntn_hydrolases_N"/>
</dbReference>
<dbReference type="InterPro" id="IPR001353">
    <property type="entry name" value="Proteasome_sua/b"/>
</dbReference>
<dbReference type="InterPro" id="IPR023333">
    <property type="entry name" value="Proteasome_suB-type"/>
</dbReference>
<dbReference type="InterPro" id="IPR022483">
    <property type="entry name" value="PSB_actinobac"/>
</dbReference>
<dbReference type="NCBIfam" id="TIGR03690">
    <property type="entry name" value="20S_bact_beta"/>
    <property type="match status" value="1"/>
</dbReference>
<dbReference type="PANTHER" id="PTHR32194:SF0">
    <property type="entry name" value="ATP-DEPENDENT PROTEASE SUBUNIT HSLV"/>
    <property type="match status" value="1"/>
</dbReference>
<dbReference type="PANTHER" id="PTHR32194">
    <property type="entry name" value="METALLOPROTEASE TLDD"/>
    <property type="match status" value="1"/>
</dbReference>
<dbReference type="Pfam" id="PF00227">
    <property type="entry name" value="Proteasome"/>
    <property type="match status" value="1"/>
</dbReference>
<dbReference type="SUPFAM" id="SSF56235">
    <property type="entry name" value="N-terminal nucleophile aminohydrolases (Ntn hydrolases)"/>
    <property type="match status" value="1"/>
</dbReference>
<dbReference type="PROSITE" id="PS51476">
    <property type="entry name" value="PROTEASOME_BETA_2"/>
    <property type="match status" value="1"/>
</dbReference>
<feature type="propeptide" id="PRO_0000397124" description="Removed in mature form; by autocatalysis" evidence="1 4">
    <location>
        <begin position="1"/>
        <end position="65"/>
    </location>
</feature>
<feature type="chain" id="PRO_0000397125" description="Proteasome subunit beta 1">
    <location>
        <begin position="66"/>
        <end position="294"/>
    </location>
</feature>
<feature type="active site" description="Nucleophile" evidence="1">
    <location>
        <position position="66"/>
    </location>
</feature>
<feature type="mutagenesis site" description="Prevents full assembly of proteasome." evidence="3">
    <original>F</original>
    <variation>A</variation>
    <location>
        <position position="210"/>
    </location>
</feature>
<feature type="mutagenesis site" description="Prevents full assembly of proteasome." evidence="3">
    <original>KK</original>
    <variation>AA</variation>
    <location>
        <begin position="216"/>
        <end position="217"/>
    </location>
</feature>
<feature type="helix" evidence="7">
    <location>
        <begin position="26"/>
        <end position="30"/>
    </location>
</feature>
<feature type="turn" evidence="7">
    <location>
        <begin position="31"/>
        <end position="33"/>
    </location>
</feature>
<feature type="helix" evidence="7">
    <location>
        <begin position="35"/>
        <end position="37"/>
    </location>
</feature>
<feature type="strand" evidence="6">
    <location>
        <begin position="68"/>
        <end position="72"/>
    </location>
</feature>
<feature type="strand" evidence="6">
    <location>
        <begin position="77"/>
        <end position="81"/>
    </location>
</feature>
<feature type="strand" evidence="6">
    <location>
        <begin position="85"/>
        <end position="87"/>
    </location>
</feature>
<feature type="strand" evidence="6">
    <location>
        <begin position="90"/>
        <end position="94"/>
    </location>
</feature>
<feature type="strand" evidence="6">
    <location>
        <begin position="99"/>
        <end position="103"/>
    </location>
</feature>
<feature type="strand" evidence="6">
    <location>
        <begin position="106"/>
        <end position="112"/>
    </location>
</feature>
<feature type="helix" evidence="6">
    <location>
        <begin position="114"/>
        <end position="135"/>
    </location>
</feature>
<feature type="helix" evidence="6">
    <location>
        <begin position="141"/>
        <end position="153"/>
    </location>
</feature>
<feature type="helix" evidence="6">
    <location>
        <begin position="156"/>
        <end position="159"/>
    </location>
</feature>
<feature type="turn" evidence="6">
    <location>
        <begin position="160"/>
        <end position="162"/>
    </location>
</feature>
<feature type="strand" evidence="6">
    <location>
        <begin position="165"/>
        <end position="172"/>
    </location>
</feature>
<feature type="strand" evidence="6">
    <location>
        <begin position="183"/>
        <end position="188"/>
    </location>
</feature>
<feature type="strand" evidence="7">
    <location>
        <begin position="190"/>
        <end position="192"/>
    </location>
</feature>
<feature type="strand" evidence="6">
    <location>
        <begin position="194"/>
        <end position="196"/>
    </location>
</feature>
<feature type="strand" evidence="6">
    <location>
        <begin position="199"/>
        <end position="205"/>
    </location>
</feature>
<feature type="helix" evidence="6">
    <location>
        <begin position="208"/>
        <end position="218"/>
    </location>
</feature>
<feature type="helix" evidence="6">
    <location>
        <begin position="225"/>
        <end position="242"/>
    </location>
</feature>
<feature type="turn" evidence="6">
    <location>
        <begin position="244"/>
        <end position="246"/>
    </location>
</feature>
<feature type="turn" evidence="6">
    <location>
        <begin position="251"/>
        <end position="254"/>
    </location>
</feature>
<feature type="strand" evidence="6">
    <location>
        <begin position="258"/>
        <end position="263"/>
    </location>
</feature>
<feature type="strand" evidence="6">
    <location>
        <begin position="266"/>
        <end position="269"/>
    </location>
</feature>
<feature type="helix" evidence="6">
    <location>
        <begin position="272"/>
        <end position="287"/>
    </location>
</feature>
<keyword id="KW-0002">3D-structure</keyword>
<keyword id="KW-0068">Autocatalytic cleavage</keyword>
<keyword id="KW-0963">Cytoplasm</keyword>
<keyword id="KW-0903">Direct protein sequencing</keyword>
<keyword id="KW-0378">Hydrolase</keyword>
<keyword id="KW-0645">Protease</keyword>
<keyword id="KW-0647">Proteasome</keyword>
<keyword id="KW-0888">Threonine protease</keyword>
<keyword id="KW-0865">Zymogen</keyword>
<protein>
    <recommendedName>
        <fullName evidence="1">Proteasome subunit beta 1</fullName>
        <ecNumber evidence="1">3.4.25.1</ecNumber>
    </recommendedName>
    <alternativeName>
        <fullName evidence="1">20S proteasome beta subunit 1</fullName>
    </alternativeName>
    <alternativeName>
        <fullName evidence="1">Proteasome core protein PrcB 1</fullName>
    </alternativeName>
</protein>
<name>PSB1_RHOER</name>
<comment type="function">
    <text evidence="1 4 5">Component of the proteasome core, a large protease complex with broad specificity involved in protein degradation. The R.erythropolis proteasomes are able to cleave oligopeptides after Tyr, Phe and Leu, very poorly after Arg but not after Glu. Thus, displays chymotrypsin-like activity, low trypsin-like activity but no caspase-like activity.</text>
</comment>
<comment type="catalytic activity">
    <reaction evidence="1 4 5">
        <text>Cleavage of peptide bonds with very broad specificity.</text>
        <dbReference type="EC" id="3.4.25.1"/>
    </reaction>
</comment>
<comment type="activity regulation">
    <text evidence="1">The formation of the proteasomal ATPase ARC-20S proteasome complex, likely via the docking of the C-termini of ARC into the intersubunit pockets in the alpha-rings, may trigger opening of the gate for substrate entry. Interconversion between the open-gate and close-gate conformations leads to a dynamic regulation of the 20S proteasome proteolysis activity.</text>
</comment>
<comment type="biophysicochemical properties">
    <kinetics>
        <KM evidence="5">61.4 uM for Suc-Leu-Leu-Val-Tyr-AMC (with the beta2-alpha1 proteasome subtype)</KM>
        <KM evidence="5">66.4 uM for Suc-Leu-Leu-Val-Tyr-AMC (with the beta2-alpha2 proteasome subtype)</KM>
        <KM evidence="5">71.2 uM for Suc-Leu-Leu-Val-Tyr-AMC (with the beta1-alpha2 proteasome subtype)</KM>
        <KM evidence="5">84.3 uM for Suc-Leu-Leu-Val-Tyr-AMC (with the beta1-alpha1 proteasome subtype)</KM>
        <text>The Vmax observed with the beta2-alpha1 proteasome subtype is 2.2-fold, 1.2-fold and 4-fold higher than that with the beta2-alpha2, beta1-alpha2 and beta1-alpha1 subtypes, respectively.</text>
    </kinetics>
</comment>
<comment type="pathway">
    <text evidence="1">Protein degradation; proteasomal Pup-dependent pathway.</text>
</comment>
<comment type="subunit">
    <text evidence="2 3 4 5">The 20S proteasome core is composed of 14 alpha and 14 beta subunits that assemble into four stacked heptameric rings, resulting in a barrel-shaped structure. The two inner rings, each composed of seven catalytic beta subunits, are sandwiched by two outer rings, each composed of seven alpha subunits. All four combinations of alpha- and beta-subunits (beta2-alpha1, beta2-alpha2, beta1-alpha2 and beta1-alpha1) yield fully assembled and proteolytically active proteasomes. The catalytic chamber with the active sites is on the inside of the barrel. Has probably a gated structure, the ends of the cylinder being occluded by the N-termini of the alpha-subunits. Is likely capped by the proteasome-associated ATPase, ARC.</text>
</comment>
<comment type="interaction">
    <interactant intactId="EBI-1037574">
        <id>Q53079</id>
    </interactant>
    <interactant intactId="EBI-1037564">
        <id>Q53080</id>
        <label>prcA1</label>
    </interactant>
    <organismsDiffer>false</organismsDiffer>
    <experiments>6</experiments>
</comment>
<comment type="subcellular location">
    <subcellularLocation>
        <location evidence="1">Cytoplasm</location>
    </subcellularLocation>
</comment>
<comment type="domain">
    <text evidence="2">In contrast to M.tuberculosis, the propeptide is required for correct proteasome folding and assembly. The propeptide is positioned strategically at the region where it can act as an assembly-promoting factor by linking its own beta-subunit to two adjacent alpha-subunits at the same time.</text>
</comment>
<comment type="similarity">
    <text evidence="1">Belongs to the peptidase T1B family.</text>
</comment>
<proteinExistence type="evidence at protein level"/>
<sequence length="294" mass="31161">MTADRPALRTGDRDTRLSFGSNLSSFTDYLRGHAPELLPENRIGHRSHSTRGGDGMESGDLAPHGTTIVALTYKGGVLLAGDRRATQGNLIASRDVEKVYVTDEYSAAGIAGTAGIAIELVRLFAVELEHYEKIEGVPLTFDGKANRLASMVRGNLGAAMQGLAVVPLLVGYDLDADDESRAGRIVSYDVVGGRYEERAGYHAVGSGSLFAKSALKKIYSPDSDEETALRAAIESLYDAADDDSATGGPDLTRGIYPTAVTITQAGAVHVSEETTSELARRIVAERTEQGGSAR</sequence>
<organism>
    <name type="scientific">Rhodococcus erythropolis</name>
    <name type="common">Arthrobacter picolinophilus</name>
    <dbReference type="NCBI Taxonomy" id="1833"/>
    <lineage>
        <taxon>Bacteria</taxon>
        <taxon>Bacillati</taxon>
        <taxon>Actinomycetota</taxon>
        <taxon>Actinomycetes</taxon>
        <taxon>Mycobacteriales</taxon>
        <taxon>Nocardiaceae</taxon>
        <taxon>Rhodococcus</taxon>
        <taxon>Rhodococcus erythropolis group</taxon>
    </lineage>
</organism>
<reference key="1">
    <citation type="journal article" date="1995" name="Curr. Biol.">
        <title>The first characterization of a eubacterial proteasome: the 20S complex of Rhodococcus.</title>
        <authorList>
            <person name="Tamura T."/>
            <person name="Nagy I."/>
            <person name="Lupas A."/>
            <person name="Lottspeich F."/>
            <person name="Cejka Z."/>
            <person name="Schoofs G."/>
            <person name="Tanaka K."/>
            <person name="de Mot R."/>
            <person name="Baumeister W."/>
        </authorList>
    </citation>
    <scope>NUCLEOTIDE SEQUENCE [GENOMIC DNA]</scope>
    <scope>PROTEIN SEQUENCE OF 66-75</scope>
    <scope>FUNCTION</scope>
    <scope>CATALYTIC ACTIVITY</scope>
    <scope>SUBSTRATE SPECIFICITY</scope>
    <scope>SUBUNIT</scope>
    <source>
        <strain>NI86/21</strain>
    </source>
</reference>
<reference key="2">
    <citation type="journal article" date="1997" name="FEBS Lett.">
        <title>Subunit topology of the Rhodococcus proteasome.</title>
        <authorList>
            <person name="Zuhl F."/>
            <person name="Tamura T."/>
            <person name="Dolenc I."/>
            <person name="Cejka Z."/>
            <person name="Nagy I."/>
            <person name="De Mot R."/>
            <person name="Baumeister W."/>
        </authorList>
    </citation>
    <scope>SUBUNIT</scope>
    <scope>FUNCTION</scope>
    <scope>CATALYTIC ACTIVITY</scope>
    <scope>SUBSTRATE SPECIFICITY</scope>
    <scope>KINETIC PARAMETERS</scope>
    <source>
        <strain>NI86/21</strain>
    </source>
</reference>
<reference key="3">
    <citation type="journal article" date="2004" name="J. Mol. Biol.">
        <title>Crystal structures of the Rhodococcus proteasome with and without its pro-peptides: implications for the role of the pro-peptide in proteasome assembly.</title>
        <authorList>
            <person name="Kwon Y.D."/>
            <person name="Nagy I."/>
            <person name="Adams P.D."/>
            <person name="Baumeister W."/>
            <person name="Jap B.K."/>
        </authorList>
    </citation>
    <scope>X-RAY CRYSTALLOGRAPHY (2.6 ANGSTROMS) OF PROCESSED AND UNPROCESSED FORMS IN COMPLEX WITH ALPHA 1 SUBUNIT</scope>
    <scope>SUBUNIT</scope>
    <scope>DOMAIN</scope>
    <scope>PROTEASOME ASSEMBLY PROCESS</scope>
</reference>
<reference key="4">
    <citation type="journal article" date="2006" name="Structure">
        <title>Proteasome assembly triggers a switch required for active-site maturation.</title>
        <authorList>
            <person name="Witt S."/>
            <person name="Kwon Y.D."/>
            <person name="Sharon M."/>
            <person name="Felderer K."/>
            <person name="Beuttler M."/>
            <person name="Robinson C.V."/>
            <person name="Baumeister W."/>
            <person name="Jap B.K."/>
        </authorList>
    </citation>
    <scope>X-RAY CRYSTALLOGRAPHY (3.2 ANGSTROMS) OF MUTANT ALA-210 IN COMPLEX WITH ALPHA 1 SUBUNIT</scope>
    <scope>PROTEASOME ASSEMBLY PROCESS</scope>
    <scope>SUBUNIT</scope>
    <scope>MUTAGENESIS OF PHE-210 AND 216-LYS-LYS-217</scope>
    <scope>IDENTIFICATION BY MASS SPECTROMETRY</scope>
</reference>
<evidence type="ECO:0000255" key="1">
    <source>
        <dbReference type="HAMAP-Rule" id="MF_02113"/>
    </source>
</evidence>
<evidence type="ECO:0000269" key="2">
    <source>
    </source>
</evidence>
<evidence type="ECO:0000269" key="3">
    <source>
    </source>
</evidence>
<evidence type="ECO:0000269" key="4">
    <source>
    </source>
</evidence>
<evidence type="ECO:0000269" key="5">
    <source>
    </source>
</evidence>
<evidence type="ECO:0007829" key="6">
    <source>
        <dbReference type="PDB" id="1Q5Q"/>
    </source>
</evidence>
<evidence type="ECO:0007829" key="7">
    <source>
        <dbReference type="PDB" id="1Q5R"/>
    </source>
</evidence>
<accession>Q53079</accession>
<gene>
    <name evidence="1" type="primary">prcB1</name>
</gene>